<reference key="1">
    <citation type="journal article" date="1998" name="Nature">
        <title>The complete genome of the hyperthermophilic bacterium Aquifex aeolicus.</title>
        <authorList>
            <person name="Deckert G."/>
            <person name="Warren P.V."/>
            <person name="Gaasterland T."/>
            <person name="Young W.G."/>
            <person name="Lenox A.L."/>
            <person name="Graham D.E."/>
            <person name="Overbeek R."/>
            <person name="Snead M.A."/>
            <person name="Keller M."/>
            <person name="Aujay M."/>
            <person name="Huber R."/>
            <person name="Feldman R.A."/>
            <person name="Short J.M."/>
            <person name="Olsen G.J."/>
            <person name="Swanson R.V."/>
        </authorList>
    </citation>
    <scope>NUCLEOTIDE SEQUENCE [LARGE SCALE GENOMIC DNA]</scope>
    <source>
        <strain>VF5</strain>
    </source>
</reference>
<feature type="chain" id="PRO_0000178043" description="Apolipoprotein N-acyltransferase">
    <location>
        <begin position="1"/>
        <end position="439"/>
    </location>
</feature>
<feature type="transmembrane region" description="Helical" evidence="1">
    <location>
        <begin position="13"/>
        <end position="33"/>
    </location>
</feature>
<feature type="transmembrane region" description="Helical" evidence="1">
    <location>
        <begin position="47"/>
        <end position="67"/>
    </location>
</feature>
<feature type="transmembrane region" description="Helical" evidence="1">
    <location>
        <begin position="75"/>
        <end position="95"/>
    </location>
</feature>
<feature type="transmembrane region" description="Helical" evidence="1">
    <location>
        <begin position="97"/>
        <end position="117"/>
    </location>
</feature>
<feature type="transmembrane region" description="Helical" evidence="1">
    <location>
        <begin position="149"/>
        <end position="169"/>
    </location>
</feature>
<feature type="transmembrane region" description="Helical" evidence="1">
    <location>
        <begin position="175"/>
        <end position="195"/>
    </location>
</feature>
<feature type="domain" description="CN hydrolase" evidence="1">
    <location>
        <begin position="207"/>
        <end position="439"/>
    </location>
</feature>
<feature type="active site" description="Proton acceptor" evidence="1">
    <location>
        <position position="248"/>
    </location>
</feature>
<feature type="active site" evidence="1">
    <location>
        <position position="305"/>
    </location>
</feature>
<feature type="active site" description="Nucleophile" evidence="1">
    <location>
        <position position="355"/>
    </location>
</feature>
<protein>
    <recommendedName>
        <fullName evidence="1">Apolipoprotein N-acyltransferase</fullName>
        <shortName evidence="1">ALP N-acyltransferase</shortName>
        <ecNumber evidence="1">2.3.1.269</ecNumber>
    </recommendedName>
</protein>
<keyword id="KW-0012">Acyltransferase</keyword>
<keyword id="KW-0997">Cell inner membrane</keyword>
<keyword id="KW-1003">Cell membrane</keyword>
<keyword id="KW-0472">Membrane</keyword>
<keyword id="KW-1185">Reference proteome</keyword>
<keyword id="KW-0808">Transferase</keyword>
<keyword id="KW-0812">Transmembrane</keyword>
<keyword id="KW-1133">Transmembrane helix</keyword>
<organism>
    <name type="scientific">Aquifex aeolicus (strain VF5)</name>
    <dbReference type="NCBI Taxonomy" id="224324"/>
    <lineage>
        <taxon>Bacteria</taxon>
        <taxon>Pseudomonadati</taxon>
        <taxon>Aquificota</taxon>
        <taxon>Aquificia</taxon>
        <taxon>Aquificales</taxon>
        <taxon>Aquificaceae</taxon>
        <taxon>Aquifex</taxon>
    </lineage>
</organism>
<proteinExistence type="inferred from homology"/>
<name>LNT_AQUAE</name>
<evidence type="ECO:0000255" key="1">
    <source>
        <dbReference type="HAMAP-Rule" id="MF_01148"/>
    </source>
</evidence>
<evidence type="ECO:0000305" key="2"/>
<sequence length="439" mass="50757">MLTDRHKEVLKGLLAGILFYLSFSKLNLYFLVFPALFLGIRKNFLRLFSFGFSAFFLSLLWIRIPLIDYGNINPFIAYPALVLLVLFLSLYQFGLTYLLWRVFKFSFFAFPFLYTLVEILRSHLPYGGFPWLLLGVNLVDIPVLRYTLNAGTVFLGSFVVLLISLFPLFNKKEKIFSLAIITPLLIYGFIKETSYRVTHYGLKIALIQPFVPQDVKLNRELFELKYGEIIELVKKAVEKKPDLVVLPESAFPFYLGELEEKGKEILELSKKVPIITGFIEIDEGFKPYNTVVLLKDGRVIEKYRKIKLVPFGEYTPFPFKFFSKYVPYLSFEDYNRGNKVKCFQLNGFSIGTPVCFEVAYPFFVKSFGCEFIAVLTNDAWFRDSEGTFQHMKLARVRAIENEKFFLWVNNTGPSGIISPRGEVIKSIDYGSRGILLFSF</sequence>
<dbReference type="EC" id="2.3.1.269" evidence="1"/>
<dbReference type="EMBL" id="AE000657">
    <property type="protein sequence ID" value="AAC06960.1"/>
    <property type="molecule type" value="Genomic_DNA"/>
</dbReference>
<dbReference type="PIR" id="E70371">
    <property type="entry name" value="E70371"/>
</dbReference>
<dbReference type="RefSeq" id="NP_213561.1">
    <property type="nucleotide sequence ID" value="NC_000918.1"/>
</dbReference>
<dbReference type="RefSeq" id="WP_010880499.1">
    <property type="nucleotide sequence ID" value="NC_000918.1"/>
</dbReference>
<dbReference type="SMR" id="O67000"/>
<dbReference type="FunCoup" id="O67000">
    <property type="interactions" value="224"/>
</dbReference>
<dbReference type="STRING" id="224324.aq_819"/>
<dbReference type="EnsemblBacteria" id="AAC06960">
    <property type="protein sequence ID" value="AAC06960"/>
    <property type="gene ID" value="aq_819"/>
</dbReference>
<dbReference type="KEGG" id="aae:aq_819"/>
<dbReference type="eggNOG" id="COG0815">
    <property type="taxonomic scope" value="Bacteria"/>
</dbReference>
<dbReference type="HOGENOM" id="CLU_019563_3_1_0"/>
<dbReference type="InParanoid" id="O67000"/>
<dbReference type="OrthoDB" id="9811121at2"/>
<dbReference type="UniPathway" id="UPA00666"/>
<dbReference type="Proteomes" id="UP000000798">
    <property type="component" value="Chromosome"/>
</dbReference>
<dbReference type="GO" id="GO:0005886">
    <property type="term" value="C:plasma membrane"/>
    <property type="evidence" value="ECO:0007669"/>
    <property type="project" value="UniProtKB-SubCell"/>
</dbReference>
<dbReference type="GO" id="GO:0016410">
    <property type="term" value="F:N-acyltransferase activity"/>
    <property type="evidence" value="ECO:0007669"/>
    <property type="project" value="UniProtKB-UniRule"/>
</dbReference>
<dbReference type="GO" id="GO:0042158">
    <property type="term" value="P:lipoprotein biosynthetic process"/>
    <property type="evidence" value="ECO:0007669"/>
    <property type="project" value="UniProtKB-UniRule"/>
</dbReference>
<dbReference type="CDD" id="cd07571">
    <property type="entry name" value="ALP_N-acyl_transferase"/>
    <property type="match status" value="1"/>
</dbReference>
<dbReference type="Gene3D" id="3.60.110.10">
    <property type="entry name" value="Carbon-nitrogen hydrolase"/>
    <property type="match status" value="1"/>
</dbReference>
<dbReference type="HAMAP" id="MF_01148">
    <property type="entry name" value="Lnt"/>
    <property type="match status" value="1"/>
</dbReference>
<dbReference type="InterPro" id="IPR004563">
    <property type="entry name" value="Apolipo_AcylTrfase"/>
</dbReference>
<dbReference type="InterPro" id="IPR003010">
    <property type="entry name" value="C-N_Hydrolase"/>
</dbReference>
<dbReference type="InterPro" id="IPR036526">
    <property type="entry name" value="C-N_Hydrolase_sf"/>
</dbReference>
<dbReference type="InterPro" id="IPR045378">
    <property type="entry name" value="LNT_N"/>
</dbReference>
<dbReference type="NCBIfam" id="TIGR00546">
    <property type="entry name" value="lnt"/>
    <property type="match status" value="1"/>
</dbReference>
<dbReference type="PANTHER" id="PTHR38686">
    <property type="entry name" value="APOLIPOPROTEIN N-ACYLTRANSFERASE"/>
    <property type="match status" value="1"/>
</dbReference>
<dbReference type="PANTHER" id="PTHR38686:SF1">
    <property type="entry name" value="APOLIPOPROTEIN N-ACYLTRANSFERASE"/>
    <property type="match status" value="1"/>
</dbReference>
<dbReference type="Pfam" id="PF00795">
    <property type="entry name" value="CN_hydrolase"/>
    <property type="match status" value="1"/>
</dbReference>
<dbReference type="Pfam" id="PF20154">
    <property type="entry name" value="LNT_N"/>
    <property type="match status" value="1"/>
</dbReference>
<dbReference type="SUPFAM" id="SSF56317">
    <property type="entry name" value="Carbon-nitrogen hydrolase"/>
    <property type="match status" value="1"/>
</dbReference>
<dbReference type="PROSITE" id="PS50263">
    <property type="entry name" value="CN_HYDROLASE"/>
    <property type="match status" value="1"/>
</dbReference>
<gene>
    <name evidence="1" type="primary">lnt</name>
    <name type="ordered locus">aq_819</name>
</gene>
<comment type="function">
    <text evidence="1">Catalyzes the phospholipid dependent N-acylation of the N-terminal cysteine of apolipoprotein, the last step in lipoprotein maturation.</text>
</comment>
<comment type="catalytic activity">
    <reaction evidence="1">
        <text>N-terminal S-1,2-diacyl-sn-glyceryl-L-cysteinyl-[lipoprotein] + a glycerophospholipid = N-acyl-S-1,2-diacyl-sn-glyceryl-L-cysteinyl-[lipoprotein] + a 2-acyl-sn-glycero-3-phospholipid + H(+)</text>
        <dbReference type="Rhea" id="RHEA:48228"/>
        <dbReference type="Rhea" id="RHEA-COMP:14681"/>
        <dbReference type="Rhea" id="RHEA-COMP:14684"/>
        <dbReference type="ChEBI" id="CHEBI:15378"/>
        <dbReference type="ChEBI" id="CHEBI:136912"/>
        <dbReference type="ChEBI" id="CHEBI:140656"/>
        <dbReference type="ChEBI" id="CHEBI:140657"/>
        <dbReference type="ChEBI" id="CHEBI:140660"/>
        <dbReference type="EC" id="2.3.1.269"/>
    </reaction>
</comment>
<comment type="pathway">
    <text evidence="1">Protein modification; lipoprotein biosynthesis (N-acyl transfer).</text>
</comment>
<comment type="subcellular location">
    <subcellularLocation>
        <location evidence="1">Cell inner membrane</location>
        <topology evidence="1">Multi-pass membrane protein</topology>
    </subcellularLocation>
</comment>
<comment type="similarity">
    <text evidence="1 2">Belongs to the CN hydrolase family. Apolipoprotein N-acyltransferase subfamily.</text>
</comment>
<accession>O67000</accession>